<organism>
    <name type="scientific">Thermococcus sibiricus (strain DSM 12597 / MM 739)</name>
    <dbReference type="NCBI Taxonomy" id="604354"/>
    <lineage>
        <taxon>Archaea</taxon>
        <taxon>Methanobacteriati</taxon>
        <taxon>Methanobacteriota</taxon>
        <taxon>Thermococci</taxon>
        <taxon>Thermococcales</taxon>
        <taxon>Thermococcaceae</taxon>
        <taxon>Thermococcus</taxon>
    </lineage>
</organism>
<sequence length="203" mass="23195">MEGARLIIEEINKEAEQKIKYILEEAEQKAEKIKQEAEKKARIKADWIIRKAQTQAELEKQRIIANAKLEVRRKKLVLQEELINEVIGAIKDRLLSIPEAEYMEILKDLIVTGIRELGEEKVVLSSNGETLSLLKAHLKEMEESVNEKLGKDITISLGEPIETIGGVIVQNLEKTIRIDNTFEARMERLQADLRTKIAKILFG</sequence>
<dbReference type="EMBL" id="CP001463">
    <property type="protein sequence ID" value="ACS90846.1"/>
    <property type="molecule type" value="Genomic_DNA"/>
</dbReference>
<dbReference type="RefSeq" id="WP_015850062.1">
    <property type="nucleotide sequence ID" value="NC_012883.1"/>
</dbReference>
<dbReference type="SMR" id="C6A5F1"/>
<dbReference type="STRING" id="604354.TSIB_1795"/>
<dbReference type="GeneID" id="8096805"/>
<dbReference type="KEGG" id="tsi:TSIB_1795"/>
<dbReference type="eggNOG" id="arCOG00869">
    <property type="taxonomic scope" value="Archaea"/>
</dbReference>
<dbReference type="HOGENOM" id="CLU_105846_1_0_2"/>
<dbReference type="OrthoDB" id="4691at2157"/>
<dbReference type="Proteomes" id="UP000009079">
    <property type="component" value="Chromosome"/>
</dbReference>
<dbReference type="GO" id="GO:0005886">
    <property type="term" value="C:plasma membrane"/>
    <property type="evidence" value="ECO:0007669"/>
    <property type="project" value="UniProtKB-SubCell"/>
</dbReference>
<dbReference type="GO" id="GO:0033178">
    <property type="term" value="C:proton-transporting two-sector ATPase complex, catalytic domain"/>
    <property type="evidence" value="ECO:0007669"/>
    <property type="project" value="InterPro"/>
</dbReference>
<dbReference type="GO" id="GO:0005524">
    <property type="term" value="F:ATP binding"/>
    <property type="evidence" value="ECO:0007669"/>
    <property type="project" value="UniProtKB-UniRule"/>
</dbReference>
<dbReference type="GO" id="GO:0046933">
    <property type="term" value="F:proton-transporting ATP synthase activity, rotational mechanism"/>
    <property type="evidence" value="ECO:0007669"/>
    <property type="project" value="UniProtKB-UniRule"/>
</dbReference>
<dbReference type="GO" id="GO:0046961">
    <property type="term" value="F:proton-transporting ATPase activity, rotational mechanism"/>
    <property type="evidence" value="ECO:0007669"/>
    <property type="project" value="InterPro"/>
</dbReference>
<dbReference type="GO" id="GO:0042777">
    <property type="term" value="P:proton motive force-driven plasma membrane ATP synthesis"/>
    <property type="evidence" value="ECO:0007669"/>
    <property type="project" value="UniProtKB-UniRule"/>
</dbReference>
<dbReference type="Gene3D" id="3.30.2320.30">
    <property type="entry name" value="ATP synthase, E subunit, C-terminal"/>
    <property type="match status" value="1"/>
</dbReference>
<dbReference type="Gene3D" id="1.20.5.620">
    <property type="entry name" value="F1F0 ATP synthase subunit B, membrane domain"/>
    <property type="match status" value="1"/>
</dbReference>
<dbReference type="HAMAP" id="MF_00311">
    <property type="entry name" value="ATP_synth_E_arch"/>
    <property type="match status" value="1"/>
</dbReference>
<dbReference type="InterPro" id="IPR028987">
    <property type="entry name" value="ATP_synth_B-like_membr_sf"/>
</dbReference>
<dbReference type="InterPro" id="IPR038495">
    <property type="entry name" value="ATPase_E_C"/>
</dbReference>
<dbReference type="InterPro" id="IPR002842">
    <property type="entry name" value="ATPase_V1_Esu"/>
</dbReference>
<dbReference type="NCBIfam" id="NF003049">
    <property type="entry name" value="PRK03963.1"/>
    <property type="match status" value="1"/>
</dbReference>
<dbReference type="PANTHER" id="PTHR45715">
    <property type="entry name" value="ATPASE H+-TRANSPORTING V1 SUBUNIT E1A-RELATED"/>
    <property type="match status" value="1"/>
</dbReference>
<dbReference type="Pfam" id="PF01991">
    <property type="entry name" value="vATP-synt_E"/>
    <property type="match status" value="1"/>
</dbReference>
<dbReference type="SUPFAM" id="SSF81573">
    <property type="entry name" value="F1F0 ATP synthase subunit B, membrane domain"/>
    <property type="match status" value="1"/>
</dbReference>
<dbReference type="SUPFAM" id="SSF160527">
    <property type="entry name" value="V-type ATPase subunit E-like"/>
    <property type="match status" value="1"/>
</dbReference>
<name>AATE_THESM</name>
<protein>
    <recommendedName>
        <fullName evidence="1">A-type ATP synthase subunit E</fullName>
    </recommendedName>
</protein>
<evidence type="ECO:0000255" key="1">
    <source>
        <dbReference type="HAMAP-Rule" id="MF_00311"/>
    </source>
</evidence>
<accession>C6A5F1</accession>
<feature type="chain" id="PRO_1000205058" description="A-type ATP synthase subunit E">
    <location>
        <begin position="1"/>
        <end position="203"/>
    </location>
</feature>
<keyword id="KW-0066">ATP synthesis</keyword>
<keyword id="KW-1003">Cell membrane</keyword>
<keyword id="KW-0375">Hydrogen ion transport</keyword>
<keyword id="KW-0406">Ion transport</keyword>
<keyword id="KW-0472">Membrane</keyword>
<keyword id="KW-1185">Reference proteome</keyword>
<keyword id="KW-0813">Transport</keyword>
<gene>
    <name evidence="1" type="primary">atpE</name>
    <name type="ordered locus">TSIB_1795</name>
</gene>
<proteinExistence type="inferred from homology"/>
<reference key="1">
    <citation type="journal article" date="2009" name="Appl. Environ. Microbiol.">
        <title>Metabolic versatility and indigenous origin of the archaeon Thermococcus sibiricus, isolated from a siberian oil reservoir, as revealed by genome analysis.</title>
        <authorList>
            <person name="Mardanov A.V."/>
            <person name="Ravin N.V."/>
            <person name="Svetlitchnyi V.A."/>
            <person name="Beletsky A.V."/>
            <person name="Miroshnichenko M.L."/>
            <person name="Bonch-Osmolovskaya E.A."/>
            <person name="Skryabin K.G."/>
        </authorList>
    </citation>
    <scope>NUCLEOTIDE SEQUENCE [LARGE SCALE GENOMIC DNA]</scope>
    <source>
        <strain>DSM 12597 / MM 739</strain>
    </source>
</reference>
<comment type="function">
    <text evidence="1">Component of the A-type ATP synthase that produces ATP from ADP in the presence of a proton gradient across the membrane.</text>
</comment>
<comment type="subunit">
    <text evidence="1">Has multiple subunits with at least A(3), B(3), C, D, E, F, H, I and proteolipid K(x).</text>
</comment>
<comment type="subcellular location">
    <subcellularLocation>
        <location evidence="1">Cell membrane</location>
        <topology evidence="1">Peripheral membrane protein</topology>
    </subcellularLocation>
</comment>
<comment type="similarity">
    <text evidence="1">Belongs to the V-ATPase E subunit family.</text>
</comment>